<dbReference type="EMBL" id="Z72950">
    <property type="protein sequence ID" value="CAA97189.1"/>
    <property type="molecule type" value="Genomic_DNA"/>
</dbReference>
<dbReference type="EMBL" id="AY723817">
    <property type="protein sequence ID" value="AAU09734.1"/>
    <property type="molecule type" value="Genomic_DNA"/>
</dbReference>
<dbReference type="EMBL" id="BK006941">
    <property type="protein sequence ID" value="DAA08259.1"/>
    <property type="molecule type" value="Genomic_DNA"/>
</dbReference>
<dbReference type="PIR" id="S64476">
    <property type="entry name" value="S64476"/>
</dbReference>
<dbReference type="RefSeq" id="NP_011681.1">
    <property type="nucleotide sequence ID" value="NM_001181294.1"/>
</dbReference>
<dbReference type="PDB" id="5MRC">
    <property type="method" value="EM"/>
    <property type="resolution" value="3.25 A"/>
    <property type="chains" value="66=27-345"/>
</dbReference>
<dbReference type="PDB" id="5MRE">
    <property type="method" value="EM"/>
    <property type="resolution" value="3.75 A"/>
    <property type="chains" value="66=27-345"/>
</dbReference>
<dbReference type="PDB" id="5MRF">
    <property type="method" value="EM"/>
    <property type="resolution" value="4.97 A"/>
    <property type="chains" value="66=27-345"/>
</dbReference>
<dbReference type="PDB" id="8D8J">
    <property type="method" value="EM"/>
    <property type="resolution" value="3.80 A"/>
    <property type="chains" value="6=1-345"/>
</dbReference>
<dbReference type="PDB" id="8D8K">
    <property type="method" value="EM"/>
    <property type="resolution" value="3.13 A"/>
    <property type="chains" value="6=1-345"/>
</dbReference>
<dbReference type="PDB" id="8D8L">
    <property type="method" value="EM"/>
    <property type="resolution" value="2.60 A"/>
    <property type="chains" value="6=1-345"/>
</dbReference>
<dbReference type="PDB" id="8OM2">
    <property type="method" value="EM"/>
    <property type="resolution" value="2.57 A"/>
    <property type="chains" value="6=1-345"/>
</dbReference>
<dbReference type="PDB" id="8OM3">
    <property type="method" value="EM"/>
    <property type="resolution" value="2.87 A"/>
    <property type="chains" value="6=1-345"/>
</dbReference>
<dbReference type="PDB" id="8OM4">
    <property type="method" value="EM"/>
    <property type="resolution" value="2.32 A"/>
    <property type="chains" value="6=1-345"/>
</dbReference>
<dbReference type="PDBsum" id="5MRC"/>
<dbReference type="PDBsum" id="5MRE"/>
<dbReference type="PDBsum" id="5MRF"/>
<dbReference type="PDBsum" id="8D8J"/>
<dbReference type="PDBsum" id="8D8K"/>
<dbReference type="PDBsum" id="8D8L"/>
<dbReference type="PDBsum" id="8OM2"/>
<dbReference type="PDBsum" id="8OM3"/>
<dbReference type="PDBsum" id="8OM4"/>
<dbReference type="EMDB" id="EMD-16966"/>
<dbReference type="EMDB" id="EMD-16967"/>
<dbReference type="EMDB" id="EMD-16968"/>
<dbReference type="EMDB" id="EMD-27249"/>
<dbReference type="EMDB" id="EMD-27250"/>
<dbReference type="EMDB" id="EMD-27251"/>
<dbReference type="EMDB" id="EMD-3551"/>
<dbReference type="EMDB" id="EMD-3552"/>
<dbReference type="EMDB" id="EMD-3553"/>
<dbReference type="SMR" id="P53292"/>
<dbReference type="BioGRID" id="33417">
    <property type="interactions" value="73"/>
</dbReference>
<dbReference type="ComplexPortal" id="CPX-1603">
    <property type="entry name" value="37S mitochondrial small ribosomal subunit"/>
</dbReference>
<dbReference type="DIP" id="DIP-5539N"/>
<dbReference type="FunCoup" id="P53292">
    <property type="interactions" value="172"/>
</dbReference>
<dbReference type="IntAct" id="P53292">
    <property type="interactions" value="47"/>
</dbReference>
<dbReference type="MINT" id="P53292"/>
<dbReference type="STRING" id="4932.YGR165W"/>
<dbReference type="iPTMnet" id="P53292"/>
<dbReference type="PaxDb" id="4932-YGR165W"/>
<dbReference type="PeptideAtlas" id="P53292"/>
<dbReference type="EnsemblFungi" id="YGR165W_mRNA">
    <property type="protein sequence ID" value="YGR165W"/>
    <property type="gene ID" value="YGR165W"/>
</dbReference>
<dbReference type="GeneID" id="853075"/>
<dbReference type="KEGG" id="sce:YGR165W"/>
<dbReference type="AGR" id="SGD:S000003397"/>
<dbReference type="SGD" id="S000003397">
    <property type="gene designation" value="MRPS35"/>
</dbReference>
<dbReference type="VEuPathDB" id="FungiDB:YGR165W"/>
<dbReference type="eggNOG" id="ENOG502QVMS">
    <property type="taxonomic scope" value="Eukaryota"/>
</dbReference>
<dbReference type="HOGENOM" id="CLU_842157_0_0_1"/>
<dbReference type="InParanoid" id="P53292"/>
<dbReference type="OMA" id="KYAMRQF"/>
<dbReference type="OrthoDB" id="10052321at2759"/>
<dbReference type="BioCyc" id="YEAST:G3O-30863-MONOMER"/>
<dbReference type="BioGRID-ORCS" id="853075">
    <property type="hits" value="0 hits in 10 CRISPR screens"/>
</dbReference>
<dbReference type="PRO" id="PR:P53292"/>
<dbReference type="Proteomes" id="UP000002311">
    <property type="component" value="Chromosome VII"/>
</dbReference>
<dbReference type="RNAct" id="P53292">
    <property type="molecule type" value="protein"/>
</dbReference>
<dbReference type="GO" id="GO:0005743">
    <property type="term" value="C:mitochondrial inner membrane"/>
    <property type="evidence" value="ECO:0000303"/>
    <property type="project" value="ComplexPortal"/>
</dbReference>
<dbReference type="GO" id="GO:0005763">
    <property type="term" value="C:mitochondrial small ribosomal subunit"/>
    <property type="evidence" value="ECO:0000314"/>
    <property type="project" value="SGD"/>
</dbReference>
<dbReference type="GO" id="GO:0005739">
    <property type="term" value="C:mitochondrion"/>
    <property type="evidence" value="ECO:0007005"/>
    <property type="project" value="SGD"/>
</dbReference>
<dbReference type="GO" id="GO:0003735">
    <property type="term" value="F:structural constituent of ribosome"/>
    <property type="evidence" value="ECO:0000314"/>
    <property type="project" value="SGD"/>
</dbReference>
<dbReference type="GO" id="GO:0032543">
    <property type="term" value="P:mitochondrial translation"/>
    <property type="evidence" value="ECO:0000318"/>
    <property type="project" value="GO_Central"/>
</dbReference>
<dbReference type="InterPro" id="IPR021036">
    <property type="entry name" value="Ribosomal_mS45"/>
</dbReference>
<dbReference type="PANTHER" id="PTHR28158">
    <property type="entry name" value="37S RIBOSOMAL PROTEIN S35, MITOCHONDRIAL"/>
    <property type="match status" value="1"/>
</dbReference>
<dbReference type="PANTHER" id="PTHR28158:SF1">
    <property type="entry name" value="SMALL RIBOSOMAL SUBUNIT PROTEIN MS45"/>
    <property type="match status" value="1"/>
</dbReference>
<dbReference type="Pfam" id="PF12298">
    <property type="entry name" value="Bot1p"/>
    <property type="match status" value="1"/>
</dbReference>
<keyword id="KW-0002">3D-structure</keyword>
<keyword id="KW-0496">Mitochondrion</keyword>
<keyword id="KW-1185">Reference proteome</keyword>
<keyword id="KW-0687">Ribonucleoprotein</keyword>
<keyword id="KW-0689">Ribosomal protein</keyword>
<keyword id="KW-0809">Transit peptide</keyword>
<gene>
    <name type="primary">MRPS35</name>
    <name type="ordered locus">YGR165W</name>
</gene>
<reference key="1">
    <citation type="journal article" date="1997" name="Yeast">
        <title>Sequence analysis of 203 kilobases from Saccharomyces cerevisiae chromosome VII.</title>
        <authorList>
            <person name="Rieger M."/>
            <person name="Brueckner M."/>
            <person name="Schaefer M."/>
            <person name="Mueller-Auer S."/>
        </authorList>
    </citation>
    <scope>NUCLEOTIDE SEQUENCE [GENOMIC DNA]</scope>
    <source>
        <strain>ATCC 204508 / S288c</strain>
    </source>
</reference>
<reference key="2">
    <citation type="journal article" date="1997" name="Nature">
        <title>The nucleotide sequence of Saccharomyces cerevisiae chromosome VII.</title>
        <authorList>
            <person name="Tettelin H."/>
            <person name="Agostoni-Carbone M.L."/>
            <person name="Albermann K."/>
            <person name="Albers M."/>
            <person name="Arroyo J."/>
            <person name="Backes U."/>
            <person name="Barreiros T."/>
            <person name="Bertani I."/>
            <person name="Bjourson A.J."/>
            <person name="Brueckner M."/>
            <person name="Bruschi C.V."/>
            <person name="Carignani G."/>
            <person name="Castagnoli L."/>
            <person name="Cerdan E."/>
            <person name="Clemente M.L."/>
            <person name="Coblenz A."/>
            <person name="Coglievina M."/>
            <person name="Coissac E."/>
            <person name="Defoor E."/>
            <person name="Del Bino S."/>
            <person name="Delius H."/>
            <person name="Delneri D."/>
            <person name="de Wergifosse P."/>
            <person name="Dujon B."/>
            <person name="Durand P."/>
            <person name="Entian K.-D."/>
            <person name="Eraso P."/>
            <person name="Escribano V."/>
            <person name="Fabiani L."/>
            <person name="Fartmann B."/>
            <person name="Feroli F."/>
            <person name="Feuermann M."/>
            <person name="Frontali L."/>
            <person name="Garcia-Gonzalez M."/>
            <person name="Garcia-Saez M.I."/>
            <person name="Goffeau A."/>
            <person name="Guerreiro P."/>
            <person name="Hani J."/>
            <person name="Hansen M."/>
            <person name="Hebling U."/>
            <person name="Hernandez K."/>
            <person name="Heumann K."/>
            <person name="Hilger F."/>
            <person name="Hofmann B."/>
            <person name="Indge K.J."/>
            <person name="James C.M."/>
            <person name="Klima R."/>
            <person name="Koetter P."/>
            <person name="Kramer B."/>
            <person name="Kramer W."/>
            <person name="Lauquin G."/>
            <person name="Leuther H."/>
            <person name="Louis E.J."/>
            <person name="Maillier E."/>
            <person name="Marconi A."/>
            <person name="Martegani E."/>
            <person name="Mazon M.J."/>
            <person name="Mazzoni C."/>
            <person name="McReynolds A.D.K."/>
            <person name="Melchioretto P."/>
            <person name="Mewes H.-W."/>
            <person name="Minenkova O."/>
            <person name="Mueller-Auer S."/>
            <person name="Nawrocki A."/>
            <person name="Netter P."/>
            <person name="Neu R."/>
            <person name="Nombela C."/>
            <person name="Oliver S.G."/>
            <person name="Panzeri L."/>
            <person name="Paoluzi S."/>
            <person name="Plevani P."/>
            <person name="Portetelle D."/>
            <person name="Portillo F."/>
            <person name="Potier S."/>
            <person name="Purnelle B."/>
            <person name="Rieger M."/>
            <person name="Riles L."/>
            <person name="Rinaldi T."/>
            <person name="Robben J."/>
            <person name="Rodrigues-Pousada C."/>
            <person name="Rodriguez-Belmonte E."/>
            <person name="Rodriguez-Torres A.M."/>
            <person name="Rose M."/>
            <person name="Ruzzi M."/>
            <person name="Saliola M."/>
            <person name="Sanchez-Perez M."/>
            <person name="Schaefer B."/>
            <person name="Schaefer M."/>
            <person name="Scharfe M."/>
            <person name="Schmidheini T."/>
            <person name="Schreer A."/>
            <person name="Skala J."/>
            <person name="Souciet J.-L."/>
            <person name="Steensma H.Y."/>
            <person name="Talla E."/>
            <person name="Thierry A."/>
            <person name="Vandenbol M."/>
            <person name="van der Aart Q.J.M."/>
            <person name="Van Dyck L."/>
            <person name="Vanoni M."/>
            <person name="Verhasselt P."/>
            <person name="Voet M."/>
            <person name="Volckaert G."/>
            <person name="Wambutt R."/>
            <person name="Watson M.D."/>
            <person name="Weber N."/>
            <person name="Wedler E."/>
            <person name="Wedler H."/>
            <person name="Wipfli P."/>
            <person name="Wolf K."/>
            <person name="Wright L.F."/>
            <person name="Zaccaria P."/>
            <person name="Zimmermann M."/>
            <person name="Zollner A."/>
            <person name="Kleine K."/>
        </authorList>
    </citation>
    <scope>NUCLEOTIDE SEQUENCE [LARGE SCALE GENOMIC DNA]</scope>
    <source>
        <strain>ATCC 204508 / S288c</strain>
    </source>
</reference>
<reference key="3">
    <citation type="journal article" date="2014" name="G3 (Bethesda)">
        <title>The reference genome sequence of Saccharomyces cerevisiae: Then and now.</title>
        <authorList>
            <person name="Engel S.R."/>
            <person name="Dietrich F.S."/>
            <person name="Fisk D.G."/>
            <person name="Binkley G."/>
            <person name="Balakrishnan R."/>
            <person name="Costanzo M.C."/>
            <person name="Dwight S.S."/>
            <person name="Hitz B.C."/>
            <person name="Karra K."/>
            <person name="Nash R.S."/>
            <person name="Weng S."/>
            <person name="Wong E.D."/>
            <person name="Lloyd P."/>
            <person name="Skrzypek M.S."/>
            <person name="Miyasato S.R."/>
            <person name="Simison M."/>
            <person name="Cherry J.M."/>
        </authorList>
    </citation>
    <scope>GENOME REANNOTATION</scope>
    <source>
        <strain>ATCC 204508 / S288c</strain>
    </source>
</reference>
<reference key="4">
    <citation type="journal article" date="2007" name="Genome Res.">
        <title>Approaching a complete repository of sequence-verified protein-encoding clones for Saccharomyces cerevisiae.</title>
        <authorList>
            <person name="Hu Y."/>
            <person name="Rolfs A."/>
            <person name="Bhullar B."/>
            <person name="Murthy T.V.S."/>
            <person name="Zhu C."/>
            <person name="Berger M.F."/>
            <person name="Camargo A.A."/>
            <person name="Kelley F."/>
            <person name="McCarron S."/>
            <person name="Jepson D."/>
            <person name="Richardson A."/>
            <person name="Raphael J."/>
            <person name="Moreira D."/>
            <person name="Taycher E."/>
            <person name="Zuo D."/>
            <person name="Mohr S."/>
            <person name="Kane M.F."/>
            <person name="Williamson J."/>
            <person name="Simpson A.J.G."/>
            <person name="Bulyk M.L."/>
            <person name="Harlow E."/>
            <person name="Marsischky G."/>
            <person name="Kolodner R.D."/>
            <person name="LaBaer J."/>
        </authorList>
    </citation>
    <scope>NUCLEOTIDE SEQUENCE [GENOMIC DNA]</scope>
    <source>
        <strain>ATCC 204508 / S288c</strain>
    </source>
</reference>
<reference key="5">
    <citation type="journal article" date="2002" name="Eur. J. Biochem.">
        <title>Tag-mediated isolation of yeast mitochondrial ribosome and mass spectrometric identification of its new components.</title>
        <authorList>
            <person name="Gan X."/>
            <person name="Kitakawa M."/>
            <person name="Yoshino K."/>
            <person name="Oshiro N."/>
            <person name="Yonezawa K."/>
            <person name="Isono K."/>
        </authorList>
    </citation>
    <scope>IDENTIFICATION IN THE MITOCHONDRIAL RIBOSOMAL SMALL COMPLEX</scope>
    <scope>IDENTIFICATION BY MASS SPECTROMETRY</scope>
</reference>
<reference key="6">
    <citation type="journal article" date="2003" name="Nature">
        <title>Global analysis of protein localization in budding yeast.</title>
        <authorList>
            <person name="Huh W.-K."/>
            <person name="Falvo J.V."/>
            <person name="Gerke L.C."/>
            <person name="Carroll A.S."/>
            <person name="Howson R.W."/>
            <person name="Weissman J.S."/>
            <person name="O'Shea E.K."/>
        </authorList>
    </citation>
    <scope>SUBCELLULAR LOCATION [LARGE SCALE ANALYSIS]</scope>
</reference>
<reference key="7">
    <citation type="journal article" date="2003" name="Nature">
        <title>Global analysis of protein expression in yeast.</title>
        <authorList>
            <person name="Ghaemmaghami S."/>
            <person name="Huh W.-K."/>
            <person name="Bower K."/>
            <person name="Howson R.W."/>
            <person name="Belle A."/>
            <person name="Dephoure N."/>
            <person name="O'Shea E.K."/>
            <person name="Weissman J.S."/>
        </authorList>
    </citation>
    <scope>LEVEL OF PROTEIN EXPRESSION [LARGE SCALE ANALYSIS]</scope>
</reference>
<reference key="8">
    <citation type="journal article" date="2006" name="J. Proteome Res.">
        <title>Toward the complete yeast mitochondrial proteome: multidimensional separation techniques for mitochondrial proteomics.</title>
        <authorList>
            <person name="Reinders J."/>
            <person name="Zahedi R.P."/>
            <person name="Pfanner N."/>
            <person name="Meisinger C."/>
            <person name="Sickmann A."/>
        </authorList>
    </citation>
    <scope>SUBCELLULAR LOCATION [LARGE SCALE ANALYSIS]</scope>
    <scope>IDENTIFICATION BY MASS SPECTROMETRY</scope>
</reference>
<reference key="9">
    <citation type="journal article" date="2015" name="Nat. Commun.">
        <title>Organization of the mitochondrial translation machinery studied in situ by cryoelectron tomography.</title>
        <authorList>
            <person name="Pfeffer S."/>
            <person name="Woellhaf M.W."/>
            <person name="Herrmann J.M."/>
            <person name="Forster F."/>
        </authorList>
    </citation>
    <scope>SUBCELLULAR LOCATION</scope>
</reference>
<reference key="10">
    <citation type="journal article" date="2017" name="Science">
        <title>The structure of the yeast mitochondrial ribosome.</title>
        <authorList>
            <person name="Desai N."/>
            <person name="Brown A."/>
            <person name="Amunts A."/>
            <person name="Ramakrishnan V."/>
        </authorList>
    </citation>
    <scope>STRUCTURE BY ELECTRON MICROSCOPY (3.25 ANGSTROMS)</scope>
    <scope>SUBUNIT</scope>
</reference>
<evidence type="ECO:0000255" key="1"/>
<evidence type="ECO:0000269" key="2">
    <source>
    </source>
</evidence>
<evidence type="ECO:0000269" key="3">
    <source>
    </source>
</evidence>
<evidence type="ECO:0000269" key="4">
    <source>
    </source>
</evidence>
<evidence type="ECO:0000269" key="5">
    <source>
    </source>
</evidence>
<evidence type="ECO:0000269" key="6">
    <source>
    </source>
</evidence>
<evidence type="ECO:0000269" key="7">
    <source>
    </source>
</evidence>
<evidence type="ECO:0000303" key="8">
    <source>
    </source>
</evidence>
<evidence type="ECO:0000305" key="9"/>
<evidence type="ECO:0000305" key="10">
    <source>
    </source>
</evidence>
<evidence type="ECO:0000305" key="11">
    <source>
    </source>
</evidence>
<evidence type="ECO:0007829" key="12">
    <source>
        <dbReference type="PDB" id="8D8K"/>
    </source>
</evidence>
<evidence type="ECO:0007829" key="13">
    <source>
        <dbReference type="PDB" id="8D8L"/>
    </source>
</evidence>
<sequence length="345" mass="39575">MSYGLTGTSSKLRGTSSIFSWTQVRHFSRRRIAYPFYPFKKLGRQHPKKHDTNLKTAMRQFLGPKNYKGEYVMNKYFTVPTNHVPNYIKPDLERGQSLEHPVTKKPLQLRYDGTLGPPPVENKRLQNIFKDRLLQPFPSNPHCKTNYVLSPQLKQSIFEEITVEGLSAQQVSQKYGLKIPRVEAIVKLVSVENSWNRRNRVSSDLKTMDETLYRMFPVFDSDASFKRENLSEIPVPQKTLASRFLTIAESEPFGPVDAAHVLELEPAVETLRNLSTVGEHSSGHQQSTNKNTKVIYGELVEGERSQYKFTNAKVGKVGYRYGSGNRDNKKDRRIGFNKLGQMVYI</sequence>
<organism>
    <name type="scientific">Saccharomyces cerevisiae (strain ATCC 204508 / S288c)</name>
    <name type="common">Baker's yeast</name>
    <dbReference type="NCBI Taxonomy" id="559292"/>
    <lineage>
        <taxon>Eukaryota</taxon>
        <taxon>Fungi</taxon>
        <taxon>Dikarya</taxon>
        <taxon>Ascomycota</taxon>
        <taxon>Saccharomycotina</taxon>
        <taxon>Saccharomycetes</taxon>
        <taxon>Saccharomycetales</taxon>
        <taxon>Saccharomycetaceae</taxon>
        <taxon>Saccharomyces</taxon>
    </lineage>
</organism>
<accession>P53292</accession>
<accession>D6VUU8</accession>
<feature type="transit peptide" description="Mitochondrion" evidence="1">
    <location>
        <begin position="1"/>
        <end position="27"/>
    </location>
</feature>
<feature type="chain" id="PRO_0000202837" description="Small ribosomal subunit protein mS45">
    <location>
        <begin position="28"/>
        <end position="345"/>
    </location>
</feature>
<feature type="helix" evidence="13">
    <location>
        <begin position="53"/>
        <end position="62"/>
    </location>
</feature>
<feature type="strand" evidence="12">
    <location>
        <begin position="74"/>
        <end position="78"/>
    </location>
</feature>
<feature type="strand" evidence="13">
    <location>
        <begin position="81"/>
        <end position="83"/>
    </location>
</feature>
<feature type="turn" evidence="13">
    <location>
        <begin position="90"/>
        <end position="95"/>
    </location>
</feature>
<feature type="turn" evidence="13">
    <location>
        <begin position="101"/>
        <end position="103"/>
    </location>
</feature>
<feature type="turn" evidence="13">
    <location>
        <begin position="124"/>
        <end position="126"/>
    </location>
</feature>
<feature type="helix" evidence="13">
    <location>
        <begin position="132"/>
        <end position="134"/>
    </location>
</feature>
<feature type="strand" evidence="12">
    <location>
        <begin position="136"/>
        <end position="139"/>
    </location>
</feature>
<feature type="helix" evidence="13">
    <location>
        <begin position="151"/>
        <end position="162"/>
    </location>
</feature>
<feature type="helix" evidence="13">
    <location>
        <begin position="168"/>
        <end position="175"/>
    </location>
</feature>
<feature type="helix" evidence="13">
    <location>
        <begin position="179"/>
        <end position="197"/>
    </location>
</feature>
<feature type="helix" evidence="13">
    <location>
        <begin position="203"/>
        <end position="213"/>
    </location>
</feature>
<feature type="strand" evidence="13">
    <location>
        <begin position="224"/>
        <end position="227"/>
    </location>
</feature>
<feature type="strand" evidence="13">
    <location>
        <begin position="232"/>
        <end position="234"/>
    </location>
</feature>
<feature type="helix" evidence="13">
    <location>
        <begin position="237"/>
        <end position="240"/>
    </location>
</feature>
<feature type="strand" evidence="13">
    <location>
        <begin position="244"/>
        <end position="248"/>
    </location>
</feature>
<feature type="helix" evidence="13">
    <location>
        <begin position="255"/>
        <end position="261"/>
    </location>
</feature>
<feature type="helix" evidence="13">
    <location>
        <begin position="267"/>
        <end position="275"/>
    </location>
</feature>
<feature type="strand" evidence="13">
    <location>
        <begin position="294"/>
        <end position="296"/>
    </location>
</feature>
<feature type="strand" evidence="13">
    <location>
        <begin position="306"/>
        <end position="311"/>
    </location>
</feature>
<feature type="turn" evidence="13">
    <location>
        <begin position="314"/>
        <end position="316"/>
    </location>
</feature>
<feature type="strand" evidence="13">
    <location>
        <begin position="334"/>
        <end position="336"/>
    </location>
</feature>
<feature type="strand" evidence="12">
    <location>
        <begin position="338"/>
        <end position="340"/>
    </location>
</feature>
<feature type="strand" evidence="13">
    <location>
        <begin position="342"/>
        <end position="344"/>
    </location>
</feature>
<protein>
    <recommendedName>
        <fullName evidence="8">Small ribosomal subunit protein mS45</fullName>
    </recommendedName>
    <alternativeName>
        <fullName>37S ribosomal protein S35, mitochondrial</fullName>
    </alternativeName>
</protein>
<name>RT35_YEAST</name>
<proteinExistence type="evidence at protein level"/>
<comment type="function">
    <text evidence="10 11">Component of the mitochondrial ribosome (mitoribosome), a dedicated translation machinery responsible for the synthesis of mitochondrial genome-encoded proteins, including at least some of the essential transmembrane subunits of the mitochondrial respiratory chain. The mitoribosomes are attached to the mitochondrial inner membrane and translation products are cotranslationally integrated into the membrane.</text>
</comment>
<comment type="subunit">
    <text evidence="2 7">Component of the mitochondrial small ribosomal subunit (mt-SSU). Mature yeast 74S mitochondrial ribosomes consist of a small (37S) and a large (54S) subunit. The 37S small subunit contains a 15S ribosomal RNA (15S mt-rRNA) and 34 different proteins. The 54S large subunit contains a 21S rRNA (21S mt-rRNA) and 46 different proteins.</text>
</comment>
<comment type="subcellular location">
    <subcellularLocation>
        <location evidence="3 5">Mitochondrion</location>
    </subcellularLocation>
    <text evidence="6">Mitoribosomes are tethered to the mitochondrial inner membrane and spatially aligned with the membrane insertion machinery through two distinct membrane contact sites, formed by the 21S rRNA expansion segment 96-ES1 and the inner membrane protein MBA1.</text>
</comment>
<comment type="miscellaneous">
    <text evidence="4">Present with 3460 molecules/cell in log phase SD medium.</text>
</comment>
<comment type="similarity">
    <text evidence="9">Belongs to the mitochondrion-specific ribosomal protein mS45 family.</text>
</comment>